<keyword id="KW-0002">3D-structure</keyword>
<keyword id="KW-0010">Activator</keyword>
<keyword id="KW-0025">Alternative splicing</keyword>
<keyword id="KW-0175">Coiled coil</keyword>
<keyword id="KW-0217">Developmental protein</keyword>
<keyword id="KW-0221">Differentiation</keyword>
<keyword id="KW-0238">DNA-binding</keyword>
<keyword id="KW-0287">Flowering</keyword>
<keyword id="KW-0539">Nucleus</keyword>
<keyword id="KW-1185">Reference proteome</keyword>
<keyword id="KW-0804">Transcription</keyword>
<keyword id="KW-0805">Transcription regulation</keyword>
<accession>P17839</accession>
<accession>O82732</accession>
<sequence>MAYQSELGGDSSPLRKSGRGKIEIKRIENTTNRQVTFCKRRNGLLKKAYELSVLCDAEVALIVFSSRGRLYEYSNNSVKGTIERYKKAISDNSNTGSVAEINAQYYQQESAKLRQQIISIQNSNRQLMGETIGSMSPKELRNLEGRLERSITRIRSKKNELLFSEIDYMQKREVDLHNDNQILRAKIAENERNNPSISLMPGGSNYEQLMPPPQTQSQPFDSRNYFQVAALQPNNHHYSSAGRQDQTALQLV</sequence>
<evidence type="ECO:0000255" key="1"/>
<evidence type="ECO:0000255" key="2">
    <source>
        <dbReference type="PROSITE-ProRule" id="PRU00251"/>
    </source>
</evidence>
<evidence type="ECO:0000255" key="3">
    <source>
        <dbReference type="PROSITE-ProRule" id="PRU00629"/>
    </source>
</evidence>
<evidence type="ECO:0000256" key="4">
    <source>
        <dbReference type="SAM" id="MobiDB-lite"/>
    </source>
</evidence>
<evidence type="ECO:0000269" key="5">
    <source>
    </source>
</evidence>
<evidence type="ECO:0000269" key="6">
    <source>
    </source>
</evidence>
<evidence type="ECO:0000269" key="7">
    <source>
    </source>
</evidence>
<evidence type="ECO:0000269" key="8">
    <source>
    </source>
</evidence>
<evidence type="ECO:0000269" key="9">
    <source>
    </source>
</evidence>
<evidence type="ECO:0000269" key="10">
    <source>
    </source>
</evidence>
<evidence type="ECO:0000269" key="11">
    <source>
    </source>
</evidence>
<evidence type="ECO:0000269" key="12">
    <source>
    </source>
</evidence>
<evidence type="ECO:0000269" key="13">
    <source>
    </source>
</evidence>
<evidence type="ECO:0000269" key="14">
    <source>
    </source>
</evidence>
<evidence type="ECO:0000269" key="15">
    <source>
    </source>
</evidence>
<evidence type="ECO:0000269" key="16">
    <source>
    </source>
</evidence>
<evidence type="ECO:0000305" key="17"/>
<evidence type="ECO:0007829" key="18">
    <source>
        <dbReference type="PDB" id="8CRA"/>
    </source>
</evidence>
<comment type="function">
    <text evidence="8 15">Probable transcription factor involved in the control of organ identity during the early development of flowers. Is required for normal development of stamens and carpels in the wild-type flower. Plays a role in maintaining the determinacy of the floral meristem. Acts as C class cadastral protein by repressing the A class floral homeotic genes like APETALA1. Forms a heterodimer via the K-box domain with either SEPALATTA1/AGL2, SEPALATTA2/AGL4, SEPALLATA3/AGL9 or AGL6 that could be involved in genes regulation during floral meristem development. Controls AHL21/GIK, a multifunctional chromatin modifier in reproductive organ patterning and differentiation (PubMed:19956801). Induces microsporogenesis through the activation of SPL/NZZ (PubMed:15254538).</text>
</comment>
<comment type="subunit">
    <text evidence="7 9">Homodimer, capable of binding to CArG-box sequences. Forms a heterodimer via the K-box domain with either SEPALATTA1/AGL2, SEPALATTA2/AGL4, SEPALLATA3/AGL9 or AGL6. Heterodimerization also seen with some other Agamous-like MADS-box proteins. Interacts with AGL15 and AGL16. Component of a complex made of FLOR1, VSP1 and AGAMOUS (AG). Binds directly with FLR1 (PubMed:11689012).</text>
</comment>
<comment type="interaction">
    <interactant intactId="EBI-592365">
        <id>P17839</id>
    </interactant>
    <interactant intactId="EBI-2315134">
        <id>Q1PEU3</id>
        <label>AGL6</label>
    </interactant>
    <organismsDiffer>false</organismsDiffer>
    <experiments>3</experiments>
</comment>
<comment type="interaction">
    <interactant intactId="EBI-592365">
        <id>P17839</id>
    </interactant>
    <interactant intactId="EBI-2315096">
        <id>Q5XXN8</id>
        <label>SEP1</label>
    </interactant>
    <organismsDiffer>false</organismsDiffer>
    <experiments>3</experiments>
</comment>
<comment type="interaction">
    <interactant intactId="EBI-592365">
        <id>P17839</id>
    </interactant>
    <interactant intactId="EBI-592020">
        <id>O22456</id>
        <label>SEP3</label>
    </interactant>
    <organismsDiffer>false</organismsDiffer>
    <experiments>5</experiments>
</comment>
<comment type="interaction">
    <interactant intactId="EBI-592365">
        <id>P17839</id>
    </interactant>
    <interactant intactId="EBI-2315153">
        <id>B4F7R9</id>
    </interactant>
    <organismsDiffer>false</organismsDiffer>
    <experiments>3</experiments>
</comment>
<comment type="subcellular location">
    <subcellularLocation>
        <location>Nucleus</location>
    </subcellularLocation>
</comment>
<comment type="alternative products">
    <event type="alternative splicing"/>
    <isoform>
        <id>P17839-1</id>
        <name>1</name>
        <sequence type="displayed"/>
    </isoform>
    <text>A number of isoforms are produced. According to EST sequences.</text>
</comment>
<comment type="tissue specificity">
    <text evidence="10">Detected early in the floral meristem but mostly expressed in stamen and carpel primordia.</text>
</comment>
<comment type="induction">
    <text evidence="5 6 10 11 12 14 16">Negatively regulated by the A class floral homeotic protein APETALA2 and by other repressors like LEUNIG, SEUSS, SAP or CURLY LEAF. Positively regulated by both LEAFY and APETALA1. Repressed by silencing mediated by polycomb group (PcG) protein complex containing EMF1 and EMF2. Up-regulated by HUA2.</text>
</comment>
<comment type="disruption phenotype">
    <text evidence="13">Mutations result in the replacement of the six stamens by six petals and of the carpels by a new mutant flower.</text>
</comment>
<comment type="sequence caution" evidence="17">
    <conflict type="erroneous gene model prediction">
        <sequence resource="EMBL-CDS" id="CAA16753"/>
    </conflict>
</comment>
<comment type="sequence caution" evidence="17">
    <conflict type="erroneous initiation">
        <sequence resource="EMBL-CDS" id="CAA37642"/>
    </conflict>
    <text>Extended N-terminus.</text>
</comment>
<comment type="sequence caution" evidence="17">
    <conflict type="erroneous gene model prediction">
        <sequence resource="EMBL-CDS" id="CAB78898"/>
    </conflict>
</comment>
<protein>
    <recommendedName>
        <fullName>Floral homeotic protein AGAMOUS</fullName>
    </recommendedName>
</protein>
<organism>
    <name type="scientific">Arabidopsis thaliana</name>
    <name type="common">Mouse-ear cress</name>
    <dbReference type="NCBI Taxonomy" id="3702"/>
    <lineage>
        <taxon>Eukaryota</taxon>
        <taxon>Viridiplantae</taxon>
        <taxon>Streptophyta</taxon>
        <taxon>Embryophyta</taxon>
        <taxon>Tracheophyta</taxon>
        <taxon>Spermatophyta</taxon>
        <taxon>Magnoliopsida</taxon>
        <taxon>eudicotyledons</taxon>
        <taxon>Gunneridae</taxon>
        <taxon>Pentapetalae</taxon>
        <taxon>rosids</taxon>
        <taxon>malvids</taxon>
        <taxon>Brassicales</taxon>
        <taxon>Brassicaceae</taxon>
        <taxon>Camelineae</taxon>
        <taxon>Arabidopsis</taxon>
    </lineage>
</organism>
<feature type="chain" id="PRO_0000199445" description="Floral homeotic protein AGAMOUS">
    <location>
        <begin position="1"/>
        <end position="252"/>
    </location>
</feature>
<feature type="domain" description="MADS-box" evidence="2">
    <location>
        <begin position="19"/>
        <end position="73"/>
    </location>
</feature>
<feature type="domain" description="K-box" evidence="3">
    <location>
        <begin position="103"/>
        <end position="193"/>
    </location>
</feature>
<feature type="region of interest" description="Disordered" evidence="4">
    <location>
        <begin position="1"/>
        <end position="20"/>
    </location>
</feature>
<feature type="coiled-coil region" evidence="1">
    <location>
        <begin position="99"/>
        <end position="166"/>
    </location>
</feature>
<feature type="sequence conflict" description="In Ref. 1; CAA37642/CAA16753/CAB78898 and 2; AEE84111." evidence="17" ref="1 2">
    <original>M</original>
    <variation>T</variation>
    <location>
        <position position="1"/>
    </location>
</feature>
<feature type="helix" evidence="18">
    <location>
        <begin position="98"/>
        <end position="127"/>
    </location>
</feature>
<feature type="turn" evidence="18">
    <location>
        <begin position="128"/>
        <end position="131"/>
    </location>
</feature>
<feature type="helix" evidence="18">
    <location>
        <begin position="132"/>
        <end position="134"/>
    </location>
</feature>
<feature type="helix" evidence="18">
    <location>
        <begin position="137"/>
        <end position="188"/>
    </location>
</feature>
<dbReference type="EMBL" id="X53579">
    <property type="protein sequence ID" value="CAA37642.1"/>
    <property type="status" value="ALT_INIT"/>
    <property type="molecule type" value="mRNA"/>
</dbReference>
<dbReference type="EMBL" id="AL021711">
    <property type="protein sequence ID" value="CAA16753.1"/>
    <property type="status" value="ALT_SEQ"/>
    <property type="molecule type" value="Genomic_DNA"/>
</dbReference>
<dbReference type="EMBL" id="AL161549">
    <property type="protein sequence ID" value="CAB78898.1"/>
    <property type="status" value="ALT_SEQ"/>
    <property type="molecule type" value="Genomic_DNA"/>
</dbReference>
<dbReference type="EMBL" id="CP002687">
    <property type="protein sequence ID" value="AEE84111.1"/>
    <property type="molecule type" value="Genomic_DNA"/>
</dbReference>
<dbReference type="PIR" id="A85214">
    <property type="entry name" value="A85214"/>
</dbReference>
<dbReference type="PIR" id="T05033">
    <property type="entry name" value="T05033"/>
</dbReference>
<dbReference type="RefSeq" id="NP_567569.3">
    <property type="nucleotide sequence ID" value="NM_118013.2"/>
</dbReference>
<dbReference type="PDB" id="8CRA">
    <property type="method" value="X-ray"/>
    <property type="resolution" value="2.40 A"/>
    <property type="chains" value="A/B/C/D=97-190"/>
</dbReference>
<dbReference type="PDBsum" id="8CRA"/>
<dbReference type="SMR" id="P17839"/>
<dbReference type="BioGRID" id="12924">
    <property type="interactions" value="34"/>
</dbReference>
<dbReference type="FunCoup" id="P17839">
    <property type="interactions" value="37"/>
</dbReference>
<dbReference type="IntAct" id="P17839">
    <property type="interactions" value="27"/>
</dbReference>
<dbReference type="STRING" id="3702.P17839"/>
<dbReference type="PaxDb" id="3702-AT4G18960.1"/>
<dbReference type="ProteomicsDB" id="244942">
    <molecule id="P17839-1"/>
</dbReference>
<dbReference type="GeneID" id="827631"/>
<dbReference type="KEGG" id="ath:AT4G18960"/>
<dbReference type="Araport" id="AT4G18960"/>
<dbReference type="TAIR" id="AT4G18960">
    <property type="gene designation" value="AG"/>
</dbReference>
<dbReference type="eggNOG" id="KOG0014">
    <property type="taxonomic scope" value="Eukaryota"/>
</dbReference>
<dbReference type="HOGENOM" id="CLU_053053_0_0_1"/>
<dbReference type="InParanoid" id="P17839"/>
<dbReference type="PhylomeDB" id="P17839"/>
<dbReference type="PRO" id="PR:P17839"/>
<dbReference type="Proteomes" id="UP000006548">
    <property type="component" value="Chromosome 4"/>
</dbReference>
<dbReference type="ExpressionAtlas" id="P17839">
    <property type="expression patterns" value="baseline and differential"/>
</dbReference>
<dbReference type="GO" id="GO:0005634">
    <property type="term" value="C:nucleus"/>
    <property type="evidence" value="ECO:0007669"/>
    <property type="project" value="UniProtKB-SubCell"/>
</dbReference>
<dbReference type="GO" id="GO:0000981">
    <property type="term" value="F:DNA-binding transcription factor activity, RNA polymerase II-specific"/>
    <property type="evidence" value="ECO:0000318"/>
    <property type="project" value="GO_Central"/>
</dbReference>
<dbReference type="GO" id="GO:0046983">
    <property type="term" value="F:protein dimerization activity"/>
    <property type="evidence" value="ECO:0007669"/>
    <property type="project" value="InterPro"/>
</dbReference>
<dbReference type="GO" id="GO:0000978">
    <property type="term" value="F:RNA polymerase II cis-regulatory region sequence-specific DNA binding"/>
    <property type="evidence" value="ECO:0000318"/>
    <property type="project" value="GO_Central"/>
</dbReference>
<dbReference type="GO" id="GO:0030154">
    <property type="term" value="P:cell differentiation"/>
    <property type="evidence" value="ECO:0007669"/>
    <property type="project" value="UniProtKB-KW"/>
</dbReference>
<dbReference type="GO" id="GO:0009908">
    <property type="term" value="P:flower development"/>
    <property type="evidence" value="ECO:0007669"/>
    <property type="project" value="UniProtKB-KW"/>
</dbReference>
<dbReference type="GO" id="GO:0045944">
    <property type="term" value="P:positive regulation of transcription by RNA polymerase II"/>
    <property type="evidence" value="ECO:0007669"/>
    <property type="project" value="InterPro"/>
</dbReference>
<dbReference type="GO" id="GO:0006357">
    <property type="term" value="P:regulation of transcription by RNA polymerase II"/>
    <property type="evidence" value="ECO:0000318"/>
    <property type="project" value="GO_Central"/>
</dbReference>
<dbReference type="CDD" id="cd00265">
    <property type="entry name" value="MADS_MEF2_like"/>
    <property type="match status" value="1"/>
</dbReference>
<dbReference type="FunFam" id="3.40.1810.10:FF:000009">
    <property type="entry name" value="agamous-like MADS-box protein AGL11"/>
    <property type="match status" value="1"/>
</dbReference>
<dbReference type="Gene3D" id="3.40.1810.10">
    <property type="entry name" value="Transcription factor, MADS-box"/>
    <property type="match status" value="1"/>
</dbReference>
<dbReference type="InterPro" id="IPR050142">
    <property type="entry name" value="MADS-box/MEF2_TF"/>
</dbReference>
<dbReference type="InterPro" id="IPR033896">
    <property type="entry name" value="MEF2-like_N"/>
</dbReference>
<dbReference type="InterPro" id="IPR002487">
    <property type="entry name" value="TF_Kbox"/>
</dbReference>
<dbReference type="InterPro" id="IPR002100">
    <property type="entry name" value="TF_MADSbox"/>
</dbReference>
<dbReference type="InterPro" id="IPR036879">
    <property type="entry name" value="TF_MADSbox_sf"/>
</dbReference>
<dbReference type="PANTHER" id="PTHR48019">
    <property type="entry name" value="SERUM RESPONSE FACTOR HOMOLOG"/>
    <property type="match status" value="1"/>
</dbReference>
<dbReference type="Pfam" id="PF01486">
    <property type="entry name" value="K-box"/>
    <property type="match status" value="1"/>
</dbReference>
<dbReference type="Pfam" id="PF00319">
    <property type="entry name" value="SRF-TF"/>
    <property type="match status" value="1"/>
</dbReference>
<dbReference type="PRINTS" id="PR00404">
    <property type="entry name" value="MADSDOMAIN"/>
</dbReference>
<dbReference type="SMART" id="SM00432">
    <property type="entry name" value="MADS"/>
    <property type="match status" value="1"/>
</dbReference>
<dbReference type="SUPFAM" id="SSF55455">
    <property type="entry name" value="SRF-like"/>
    <property type="match status" value="1"/>
</dbReference>
<dbReference type="PROSITE" id="PS51297">
    <property type="entry name" value="K_BOX"/>
    <property type="match status" value="1"/>
</dbReference>
<dbReference type="PROSITE" id="PS00350">
    <property type="entry name" value="MADS_BOX_1"/>
    <property type="match status" value="1"/>
</dbReference>
<dbReference type="PROSITE" id="PS50066">
    <property type="entry name" value="MADS_BOX_2"/>
    <property type="match status" value="1"/>
</dbReference>
<proteinExistence type="evidence at protein level"/>
<gene>
    <name type="primary">AG</name>
    <name type="ordered locus">At4g18960</name>
    <name type="ORF">F13C5.130</name>
</gene>
<name>AG_ARATH</name>
<reference key="1">
    <citation type="journal article" date="1990" name="Nature">
        <title>The protein encoded by the Arabidopsis homeotic gene agamous resembles transcription factors.</title>
        <authorList>
            <person name="Yanofsky M.F."/>
            <person name="Ma H."/>
            <person name="Bowman J.L."/>
            <person name="Drews G."/>
            <person name="Feldmann K.A."/>
            <person name="Meyerowitz E.M."/>
        </authorList>
    </citation>
    <scope>NUCLEOTIDE SEQUENCE [MRNA]</scope>
    <scope>DISRUPTION PHENOTYPE</scope>
    <source>
        <strain>cv. Landsberg erecta</strain>
    </source>
</reference>
<reference key="2">
    <citation type="journal article" date="1999" name="Nature">
        <title>Sequence and analysis of chromosome 4 of the plant Arabidopsis thaliana.</title>
        <authorList>
            <person name="Mayer K.F.X."/>
            <person name="Schueller C."/>
            <person name="Wambutt R."/>
            <person name="Murphy G."/>
            <person name="Volckaert G."/>
            <person name="Pohl T."/>
            <person name="Duesterhoeft A."/>
            <person name="Stiekema W."/>
            <person name="Entian K.-D."/>
            <person name="Terryn N."/>
            <person name="Harris B."/>
            <person name="Ansorge W."/>
            <person name="Brandt P."/>
            <person name="Grivell L.A."/>
            <person name="Rieger M."/>
            <person name="Weichselgartner M."/>
            <person name="de Simone V."/>
            <person name="Obermaier B."/>
            <person name="Mache R."/>
            <person name="Mueller M."/>
            <person name="Kreis M."/>
            <person name="Delseny M."/>
            <person name="Puigdomenech P."/>
            <person name="Watson M."/>
            <person name="Schmidtheini T."/>
            <person name="Reichert B."/>
            <person name="Portetelle D."/>
            <person name="Perez-Alonso M."/>
            <person name="Boutry M."/>
            <person name="Bancroft I."/>
            <person name="Vos P."/>
            <person name="Hoheisel J."/>
            <person name="Zimmermann W."/>
            <person name="Wedler H."/>
            <person name="Ridley P."/>
            <person name="Langham S.-A."/>
            <person name="McCullagh B."/>
            <person name="Bilham L."/>
            <person name="Robben J."/>
            <person name="van der Schueren J."/>
            <person name="Grymonprez B."/>
            <person name="Chuang Y.-J."/>
            <person name="Vandenbussche F."/>
            <person name="Braeken M."/>
            <person name="Weltjens I."/>
            <person name="Voet M."/>
            <person name="Bastiaens I."/>
            <person name="Aert R."/>
            <person name="Defoor E."/>
            <person name="Weitzenegger T."/>
            <person name="Bothe G."/>
            <person name="Ramsperger U."/>
            <person name="Hilbert H."/>
            <person name="Braun M."/>
            <person name="Holzer E."/>
            <person name="Brandt A."/>
            <person name="Peters S."/>
            <person name="van Staveren M."/>
            <person name="Dirkse W."/>
            <person name="Mooijman P."/>
            <person name="Klein Lankhorst R."/>
            <person name="Rose M."/>
            <person name="Hauf J."/>
            <person name="Koetter P."/>
            <person name="Berneiser S."/>
            <person name="Hempel S."/>
            <person name="Feldpausch M."/>
            <person name="Lamberth S."/>
            <person name="Van den Daele H."/>
            <person name="De Keyser A."/>
            <person name="Buysshaert C."/>
            <person name="Gielen J."/>
            <person name="Villarroel R."/>
            <person name="De Clercq R."/>
            <person name="van Montagu M."/>
            <person name="Rogers J."/>
            <person name="Cronin A."/>
            <person name="Quail M.A."/>
            <person name="Bray-Allen S."/>
            <person name="Clark L."/>
            <person name="Doggett J."/>
            <person name="Hall S."/>
            <person name="Kay M."/>
            <person name="Lennard N."/>
            <person name="McLay K."/>
            <person name="Mayes R."/>
            <person name="Pettett A."/>
            <person name="Rajandream M.A."/>
            <person name="Lyne M."/>
            <person name="Benes V."/>
            <person name="Rechmann S."/>
            <person name="Borkova D."/>
            <person name="Bloecker H."/>
            <person name="Scharfe M."/>
            <person name="Grimm M."/>
            <person name="Loehnert T.-H."/>
            <person name="Dose S."/>
            <person name="de Haan M."/>
            <person name="Maarse A.C."/>
            <person name="Schaefer M."/>
            <person name="Mueller-Auer S."/>
            <person name="Gabel C."/>
            <person name="Fuchs M."/>
            <person name="Fartmann B."/>
            <person name="Granderath K."/>
            <person name="Dauner D."/>
            <person name="Herzl A."/>
            <person name="Neumann S."/>
            <person name="Argiriou A."/>
            <person name="Vitale D."/>
            <person name="Liguori R."/>
            <person name="Piravandi E."/>
            <person name="Massenet O."/>
            <person name="Quigley F."/>
            <person name="Clabauld G."/>
            <person name="Muendlein A."/>
            <person name="Felber R."/>
            <person name="Schnabl S."/>
            <person name="Hiller R."/>
            <person name="Schmidt W."/>
            <person name="Lecharny A."/>
            <person name="Aubourg S."/>
            <person name="Chefdor F."/>
            <person name="Cooke R."/>
            <person name="Berger C."/>
            <person name="Monfort A."/>
            <person name="Casacuberta E."/>
            <person name="Gibbons T."/>
            <person name="Weber N."/>
            <person name="Vandenbol M."/>
            <person name="Bargues M."/>
            <person name="Terol J."/>
            <person name="Torres A."/>
            <person name="Perez-Perez A."/>
            <person name="Purnelle B."/>
            <person name="Bent E."/>
            <person name="Johnson S."/>
            <person name="Tacon D."/>
            <person name="Jesse T."/>
            <person name="Heijnen L."/>
            <person name="Schwarz S."/>
            <person name="Scholler P."/>
            <person name="Heber S."/>
            <person name="Francs P."/>
            <person name="Bielke C."/>
            <person name="Frishman D."/>
            <person name="Haase D."/>
            <person name="Lemcke K."/>
            <person name="Mewes H.-W."/>
            <person name="Stocker S."/>
            <person name="Zaccaria P."/>
            <person name="Bevan M."/>
            <person name="Wilson R.K."/>
            <person name="de la Bastide M."/>
            <person name="Habermann K."/>
            <person name="Parnell L."/>
            <person name="Dedhia N."/>
            <person name="Gnoj L."/>
            <person name="Schutz K."/>
            <person name="Huang E."/>
            <person name="Spiegel L."/>
            <person name="Sekhon M."/>
            <person name="Murray J."/>
            <person name="Sheet P."/>
            <person name="Cordes M."/>
            <person name="Abu-Threideh J."/>
            <person name="Stoneking T."/>
            <person name="Kalicki J."/>
            <person name="Graves T."/>
            <person name="Harmon G."/>
            <person name="Edwards J."/>
            <person name="Latreille P."/>
            <person name="Courtney L."/>
            <person name="Cloud J."/>
            <person name="Abbott A."/>
            <person name="Scott K."/>
            <person name="Johnson D."/>
            <person name="Minx P."/>
            <person name="Bentley D."/>
            <person name="Fulton B."/>
            <person name="Miller N."/>
            <person name="Greco T."/>
            <person name="Kemp K."/>
            <person name="Kramer J."/>
            <person name="Fulton L."/>
            <person name="Mardis E."/>
            <person name="Dante M."/>
            <person name="Pepin K."/>
            <person name="Hillier L.W."/>
            <person name="Nelson J."/>
            <person name="Spieth J."/>
            <person name="Ryan E."/>
            <person name="Andrews S."/>
            <person name="Geisel C."/>
            <person name="Layman D."/>
            <person name="Du H."/>
            <person name="Ali J."/>
            <person name="Berghoff A."/>
            <person name="Jones K."/>
            <person name="Drone K."/>
            <person name="Cotton M."/>
            <person name="Joshu C."/>
            <person name="Antonoiu B."/>
            <person name="Zidanic M."/>
            <person name="Strong C."/>
            <person name="Sun H."/>
            <person name="Lamar B."/>
            <person name="Yordan C."/>
            <person name="Ma P."/>
            <person name="Zhong J."/>
            <person name="Preston R."/>
            <person name="Vil D."/>
            <person name="Shekher M."/>
            <person name="Matero A."/>
            <person name="Shah R."/>
            <person name="Swaby I.K."/>
            <person name="O'Shaughnessy A."/>
            <person name="Rodriguez M."/>
            <person name="Hoffman J."/>
            <person name="Till S."/>
            <person name="Granat S."/>
            <person name="Shohdy N."/>
            <person name="Hasegawa A."/>
            <person name="Hameed A."/>
            <person name="Lodhi M."/>
            <person name="Johnson A."/>
            <person name="Chen E."/>
            <person name="Marra M.A."/>
            <person name="Martienssen R."/>
            <person name="McCombie W.R."/>
        </authorList>
    </citation>
    <scope>NUCLEOTIDE SEQUENCE [LARGE SCALE GENOMIC DNA]</scope>
    <source>
        <strain>cv. Columbia</strain>
    </source>
</reference>
<reference key="3">
    <citation type="journal article" date="2017" name="Plant J.">
        <title>Araport11: a complete reannotation of the Arabidopsis thaliana reference genome.</title>
        <authorList>
            <person name="Cheng C.Y."/>
            <person name="Krishnakumar V."/>
            <person name="Chan A.P."/>
            <person name="Thibaud-Nissen F."/>
            <person name="Schobel S."/>
            <person name="Town C.D."/>
        </authorList>
    </citation>
    <scope>GENOME REANNOTATION</scope>
    <source>
        <strain>cv. Columbia</strain>
    </source>
</reference>
<reference key="4">
    <citation type="journal article" date="1991" name="Cell">
        <title>Negative regulation of the Arabidopsis homeotic gene AGAMOUS by the APETALA2 product.</title>
        <authorList>
            <person name="Drews G.N."/>
            <person name="Bowman J.L."/>
            <person name="Meyerowitz E.M."/>
        </authorList>
    </citation>
    <scope>TISSUE SPECIFICITY</scope>
    <scope>INDUCTION</scope>
</reference>
<reference key="5">
    <citation type="journal article" date="1993" name="Science">
        <title>Activation of floral homeotic genes in Arabidopsis.</title>
        <authorList>
            <person name="Weigel D."/>
            <person name="Meyerowitz E.M."/>
        </authorList>
    </citation>
    <scope>INDUCTION</scope>
</reference>
<reference key="6">
    <citation type="journal article" date="1994" name="Cell">
        <title>The ABCs of floral homeotic genes.</title>
        <authorList>
            <person name="Weigel D."/>
            <person name="Meyerowitz E.M."/>
        </authorList>
    </citation>
    <scope>REVIEW</scope>
</reference>
<reference key="7">
    <citation type="journal article" date="1996" name="Proc. Natl. Acad. Sci. U.S.A.">
        <title>Dimerization specificity of Arabidopsis MADS domain homeotic proteins APETALA1, APETALA3, PISTILLATA, and AGAMOUS.</title>
        <authorList>
            <person name="Riechmann J.L."/>
            <person name="Krizek B.A."/>
            <person name="Meyerowitz E.M."/>
        </authorList>
    </citation>
    <scope>CHARACTERIZATION</scope>
</reference>
<reference key="8">
    <citation type="journal article" date="1997" name="Plant J.">
        <title>Specific interactions between the K domains of AG and AGLs, members of the MADS domain family of DNA binding proteins.</title>
        <authorList>
            <person name="Fan H.-Y."/>
            <person name="Hu Y."/>
            <person name="Tudor M."/>
            <person name="Ma H."/>
        </authorList>
    </citation>
    <scope>CHARACTERIZATION</scope>
</reference>
<reference key="9">
    <citation type="journal article" date="1998" name="Nature">
        <title>A genetic framework for floral patterning.</title>
        <authorList>
            <person name="Parcy F."/>
            <person name="Nilsson O."/>
            <person name="Busch M.A."/>
            <person name="Lee I."/>
            <person name="Weigel D."/>
        </authorList>
    </citation>
    <scope>INDUCTION</scope>
</reference>
<reference key="10">
    <citation type="journal article" date="1999" name="Mol. Cell">
        <title>HUA1 and HUA2 are two members of the floral homeotic AGAMOUS pathway.</title>
        <authorList>
            <person name="Chen X."/>
            <person name="Meyerowitz E.M."/>
        </authorList>
    </citation>
    <scope>INDUCTION BY HUA2</scope>
    <source>
        <strain>cv. Columbia</strain>
    </source>
</reference>
<reference key="11">
    <citation type="journal article" date="2000" name="Proc. Natl. Acad. Sci. U.S.A.">
        <title>LEUNIG, a putative transcriptional corepressor that regulates AGAMOUS expression during flower development.</title>
        <authorList>
            <person name="Conner J."/>
            <person name="Liu Z."/>
        </authorList>
    </citation>
    <scope>INDUCTION</scope>
</reference>
<reference key="12">
    <citation type="journal article" date="2001" name="Biochem. Biophys. Res. Commun.">
        <title>Floral transcription factor AGAMOUS interacts in vitro with a leucine-rich repeat and an acid phosphatase protein complex.</title>
        <authorList>
            <person name="Gamboa A."/>
            <person name="Paez-Valencia J."/>
            <person name="Acevedo G.F."/>
            <person name="Vazquez-Moreno L."/>
            <person name="Alvarez-Buylla R.E."/>
        </authorList>
    </citation>
    <scope>INTERACTION WITH FLR1</scope>
    <source>
        <strain>cv. Columbia</strain>
        <strain>cv. Landsberg erecta</strain>
    </source>
</reference>
<reference key="13">
    <citation type="journal article" date="2004" name="Nature">
        <title>The homeotic protein AGAMOUS controls microsporogenesis by regulation of SPOROCYTELESS.</title>
        <authorList>
            <person name="Ito T."/>
            <person name="Wellmer F."/>
            <person name="Yu H."/>
            <person name="Das P."/>
            <person name="Ito N."/>
            <person name="Alves-Ferreira M."/>
            <person name="Riechmann J.L."/>
            <person name="Meyerowitz E.M."/>
        </authorList>
    </citation>
    <scope>FUNCTION</scope>
</reference>
<reference key="14">
    <citation type="journal article" date="2005" name="Plant Cell">
        <title>Comprehensive interaction map of the Arabidopsis MADS Box transcription factors.</title>
        <authorList>
            <person name="de Folter S."/>
            <person name="Immink R.G.H."/>
            <person name="Kieffer M."/>
            <person name="Parenicova L."/>
            <person name="Henz S.R."/>
            <person name="Weigel D."/>
            <person name="Busscher M."/>
            <person name="Kooiker M."/>
            <person name="Colombo L."/>
            <person name="Kater M.M."/>
            <person name="Davies B."/>
            <person name="Angenent G.C."/>
        </authorList>
    </citation>
    <scope>INTERACTION WITH AGL15 AND AGL16</scope>
</reference>
<reference key="15">
    <citation type="journal article" date="2008" name="Plant Cell">
        <title>EMBRYONIC FLOWER1 participates in polycomb group-mediated AG gene silencing in Arabidopsis.</title>
        <authorList>
            <person name="Calonje M."/>
            <person name="Sanchez R."/>
            <person name="Chen L."/>
            <person name="Sung Z.R."/>
        </authorList>
    </citation>
    <scope>INDUCTION BY EMF1</scope>
</reference>
<reference key="16">
    <citation type="journal article" date="2009" name="PLoS Biol.">
        <title>AGAMOUS controls GIANT KILLER, a multifunctional chromatin modifier in reproductive organ patterning and differentiation.</title>
        <authorList>
            <person name="Ng K.H."/>
            <person name="Yu H."/>
            <person name="Ito T."/>
        </authorList>
    </citation>
    <scope>FUNCTION</scope>
</reference>
<reference key="17">
    <citation type="journal article" date="2010" name="Plant Physiol.">
        <title>Epigenetic regulation of gene programs by EMF1 and EMF2 in Arabidopsis.</title>
        <authorList>
            <person name="Kim S.Y."/>
            <person name="Zhu T."/>
            <person name="Sung Z.R."/>
        </authorList>
    </citation>
    <scope>INDUCTION BY EMF1 AND EMF2</scope>
</reference>